<organism>
    <name type="scientific">Streptococcus thermophilus (strain CNRZ 1066)</name>
    <dbReference type="NCBI Taxonomy" id="299768"/>
    <lineage>
        <taxon>Bacteria</taxon>
        <taxon>Bacillati</taxon>
        <taxon>Bacillota</taxon>
        <taxon>Bacilli</taxon>
        <taxon>Lactobacillales</taxon>
        <taxon>Streptococcaceae</taxon>
        <taxon>Streptococcus</taxon>
    </lineage>
</organism>
<protein>
    <recommendedName>
        <fullName evidence="1">Endoribonuclease YbeY</fullName>
        <ecNumber evidence="1">3.1.-.-</ecNumber>
    </recommendedName>
</protein>
<reference key="1">
    <citation type="journal article" date="2004" name="Nat. Biotechnol.">
        <title>Complete sequence and comparative genome analysis of the dairy bacterium Streptococcus thermophilus.</title>
        <authorList>
            <person name="Bolotin A."/>
            <person name="Quinquis B."/>
            <person name="Renault P."/>
            <person name="Sorokin A."/>
            <person name="Ehrlich S.D."/>
            <person name="Kulakauskas S."/>
            <person name="Lapidus A."/>
            <person name="Goltsman E."/>
            <person name="Mazur M."/>
            <person name="Pusch G.D."/>
            <person name="Fonstein M."/>
            <person name="Overbeek R."/>
            <person name="Kyprides N."/>
            <person name="Purnelle B."/>
            <person name="Prozzi D."/>
            <person name="Ngui K."/>
            <person name="Masuy D."/>
            <person name="Hancy F."/>
            <person name="Burteau S."/>
            <person name="Boutry M."/>
            <person name="Delcour J."/>
            <person name="Goffeau A."/>
            <person name="Hols P."/>
        </authorList>
    </citation>
    <scope>NUCLEOTIDE SEQUENCE [LARGE SCALE GENOMIC DNA]</scope>
    <source>
        <strain>CNRZ 1066</strain>
    </source>
</reference>
<gene>
    <name evidence="1" type="primary">ybeY</name>
    <name type="ordered locus">str0617</name>
</gene>
<feature type="chain" id="PRO_0000102546" description="Endoribonuclease YbeY">
    <location>
        <begin position="1"/>
        <end position="165"/>
    </location>
</feature>
<feature type="binding site" evidence="1">
    <location>
        <position position="130"/>
    </location>
    <ligand>
        <name>Zn(2+)</name>
        <dbReference type="ChEBI" id="CHEBI:29105"/>
        <note>catalytic</note>
    </ligand>
</feature>
<feature type="binding site" evidence="1">
    <location>
        <position position="134"/>
    </location>
    <ligand>
        <name>Zn(2+)</name>
        <dbReference type="ChEBI" id="CHEBI:29105"/>
        <note>catalytic</note>
    </ligand>
</feature>
<feature type="binding site" evidence="1">
    <location>
        <position position="140"/>
    </location>
    <ligand>
        <name>Zn(2+)</name>
        <dbReference type="ChEBI" id="CHEBI:29105"/>
        <note>catalytic</note>
    </ligand>
</feature>
<evidence type="ECO:0000255" key="1">
    <source>
        <dbReference type="HAMAP-Rule" id="MF_00009"/>
    </source>
</evidence>
<name>YBEY_STRT1</name>
<keyword id="KW-0963">Cytoplasm</keyword>
<keyword id="KW-0255">Endonuclease</keyword>
<keyword id="KW-0378">Hydrolase</keyword>
<keyword id="KW-0479">Metal-binding</keyword>
<keyword id="KW-0540">Nuclease</keyword>
<keyword id="KW-0690">Ribosome biogenesis</keyword>
<keyword id="KW-0698">rRNA processing</keyword>
<keyword id="KW-0862">Zinc</keyword>
<proteinExistence type="inferred from homology"/>
<dbReference type="EC" id="3.1.-.-" evidence="1"/>
<dbReference type="EMBL" id="CP000024">
    <property type="protein sequence ID" value="AAV62213.1"/>
    <property type="molecule type" value="Genomic_DNA"/>
</dbReference>
<dbReference type="RefSeq" id="WP_002950224.1">
    <property type="nucleotide sequence ID" value="NC_006449.1"/>
</dbReference>
<dbReference type="SMR" id="Q5M0P3"/>
<dbReference type="GeneID" id="66898524"/>
<dbReference type="KEGG" id="stc:str0617"/>
<dbReference type="HOGENOM" id="CLU_106710_3_0_9"/>
<dbReference type="GO" id="GO:0005737">
    <property type="term" value="C:cytoplasm"/>
    <property type="evidence" value="ECO:0007669"/>
    <property type="project" value="UniProtKB-SubCell"/>
</dbReference>
<dbReference type="GO" id="GO:0004222">
    <property type="term" value="F:metalloendopeptidase activity"/>
    <property type="evidence" value="ECO:0007669"/>
    <property type="project" value="InterPro"/>
</dbReference>
<dbReference type="GO" id="GO:0004521">
    <property type="term" value="F:RNA endonuclease activity"/>
    <property type="evidence" value="ECO:0007669"/>
    <property type="project" value="UniProtKB-UniRule"/>
</dbReference>
<dbReference type="GO" id="GO:0008270">
    <property type="term" value="F:zinc ion binding"/>
    <property type="evidence" value="ECO:0007669"/>
    <property type="project" value="UniProtKB-UniRule"/>
</dbReference>
<dbReference type="GO" id="GO:0006364">
    <property type="term" value="P:rRNA processing"/>
    <property type="evidence" value="ECO:0007669"/>
    <property type="project" value="UniProtKB-UniRule"/>
</dbReference>
<dbReference type="Gene3D" id="3.40.390.30">
    <property type="entry name" value="Metalloproteases ('zincins'), catalytic domain"/>
    <property type="match status" value="1"/>
</dbReference>
<dbReference type="HAMAP" id="MF_00009">
    <property type="entry name" value="Endoribonucl_YbeY"/>
    <property type="match status" value="1"/>
</dbReference>
<dbReference type="InterPro" id="IPR023091">
    <property type="entry name" value="MetalPrtase_cat_dom_sf_prd"/>
</dbReference>
<dbReference type="InterPro" id="IPR002036">
    <property type="entry name" value="YbeY"/>
</dbReference>
<dbReference type="InterPro" id="IPR020549">
    <property type="entry name" value="YbeY_CS"/>
</dbReference>
<dbReference type="NCBIfam" id="TIGR00043">
    <property type="entry name" value="rRNA maturation RNase YbeY"/>
    <property type="match status" value="1"/>
</dbReference>
<dbReference type="PANTHER" id="PTHR46986">
    <property type="entry name" value="ENDORIBONUCLEASE YBEY, CHLOROPLASTIC"/>
    <property type="match status" value="1"/>
</dbReference>
<dbReference type="PANTHER" id="PTHR46986:SF1">
    <property type="entry name" value="ENDORIBONUCLEASE YBEY, CHLOROPLASTIC"/>
    <property type="match status" value="1"/>
</dbReference>
<dbReference type="Pfam" id="PF02130">
    <property type="entry name" value="YbeY"/>
    <property type="match status" value="1"/>
</dbReference>
<dbReference type="SUPFAM" id="SSF55486">
    <property type="entry name" value="Metalloproteases ('zincins'), catalytic domain"/>
    <property type="match status" value="1"/>
</dbReference>
<dbReference type="PROSITE" id="PS01306">
    <property type="entry name" value="UPF0054"/>
    <property type="match status" value="1"/>
</dbReference>
<sequence length="165" mass="19208">MYVEMIDETGQVSEEIKKQTLELLDFAAQKLGKKDKEMAVTFVTNERSHELNLEYRDTDRPTDVISLEYKPELDITFDEEDLAENPELAEMMGEFDSYIGELFISIDKAREQAEEYGHSYEREMGFLAVHGFLHINGYDHYTPEEEAEMFGLQEEILTAYGLTRQ</sequence>
<comment type="function">
    <text evidence="1">Single strand-specific metallo-endoribonuclease involved in late-stage 70S ribosome quality control and in maturation of the 3' terminus of the 16S rRNA.</text>
</comment>
<comment type="cofactor">
    <cofactor evidence="1">
        <name>Zn(2+)</name>
        <dbReference type="ChEBI" id="CHEBI:29105"/>
    </cofactor>
    <text evidence="1">Binds 1 zinc ion.</text>
</comment>
<comment type="subcellular location">
    <subcellularLocation>
        <location evidence="1">Cytoplasm</location>
    </subcellularLocation>
</comment>
<comment type="similarity">
    <text evidence="1">Belongs to the endoribonuclease YbeY family.</text>
</comment>
<accession>Q5M0P3</accession>